<sequence>MDIAALLSGGVDSSVVVHLLCEQGYKPTLFYIKIGMDGAEYMDCSAEEDIELSTAIARRYGLALEVVDLHREYWDNVAAYAIEKIRKGQTPNPDVMCNKLIKFGCFEQQVGKDFDLTATGHYATTLQLGGKTWLGTAKDPIKDQTDFLAQIDYLQVSKLLFPIGGLMKHEVREIALRAGLPSARRKDSQGICFLGKINYNDFVRRFLGEKEGAVIEFETGKKIGTHRGYWFHTIGQRKGLGLGGGPWFVVKKDIQDNIIYVSHGYDAEQQYGYEFRMKDFNFITDNPWEGSTGEEEVTFKIRHTPEFIKGRLLHDEEGYRIISSEKLQGIAPGQFGVIYDAESRVCFGSGEIG</sequence>
<organism>
    <name type="scientific">Bacteroides fragilis (strain YCH46)</name>
    <dbReference type="NCBI Taxonomy" id="295405"/>
    <lineage>
        <taxon>Bacteria</taxon>
        <taxon>Pseudomonadati</taxon>
        <taxon>Bacteroidota</taxon>
        <taxon>Bacteroidia</taxon>
        <taxon>Bacteroidales</taxon>
        <taxon>Bacteroidaceae</taxon>
        <taxon>Bacteroides</taxon>
    </lineage>
</organism>
<evidence type="ECO:0000255" key="1">
    <source>
        <dbReference type="HAMAP-Rule" id="MF_00144"/>
    </source>
</evidence>
<dbReference type="EC" id="2.8.1.13" evidence="1"/>
<dbReference type="EMBL" id="AP006841">
    <property type="protein sequence ID" value="BAD48158.1"/>
    <property type="molecule type" value="Genomic_DNA"/>
</dbReference>
<dbReference type="RefSeq" id="WP_011202407.1">
    <property type="nucleotide sequence ID" value="NC_006347.1"/>
</dbReference>
<dbReference type="RefSeq" id="YP_098692.1">
    <property type="nucleotide sequence ID" value="NC_006347.1"/>
</dbReference>
<dbReference type="SMR" id="Q64WG8"/>
<dbReference type="STRING" id="295405.BF1407"/>
<dbReference type="KEGG" id="bfr:BF1407"/>
<dbReference type="PATRIC" id="fig|295405.11.peg.1374"/>
<dbReference type="HOGENOM" id="CLU_035188_1_0_10"/>
<dbReference type="OrthoDB" id="9800696at2"/>
<dbReference type="Proteomes" id="UP000002197">
    <property type="component" value="Chromosome"/>
</dbReference>
<dbReference type="GO" id="GO:0005737">
    <property type="term" value="C:cytoplasm"/>
    <property type="evidence" value="ECO:0007669"/>
    <property type="project" value="UniProtKB-SubCell"/>
</dbReference>
<dbReference type="GO" id="GO:0005524">
    <property type="term" value="F:ATP binding"/>
    <property type="evidence" value="ECO:0007669"/>
    <property type="project" value="UniProtKB-KW"/>
</dbReference>
<dbReference type="GO" id="GO:0000049">
    <property type="term" value="F:tRNA binding"/>
    <property type="evidence" value="ECO:0007669"/>
    <property type="project" value="UniProtKB-KW"/>
</dbReference>
<dbReference type="GO" id="GO:0103016">
    <property type="term" value="F:tRNA-uridine 2-sulfurtransferase activity"/>
    <property type="evidence" value="ECO:0007669"/>
    <property type="project" value="UniProtKB-EC"/>
</dbReference>
<dbReference type="GO" id="GO:0006400">
    <property type="term" value="P:tRNA modification"/>
    <property type="evidence" value="ECO:0007669"/>
    <property type="project" value="UniProtKB-UniRule"/>
</dbReference>
<dbReference type="CDD" id="cd01998">
    <property type="entry name" value="MnmA_TRMU-like"/>
    <property type="match status" value="1"/>
</dbReference>
<dbReference type="FunFam" id="2.30.30.280:FF:000001">
    <property type="entry name" value="tRNA-specific 2-thiouridylase MnmA"/>
    <property type="match status" value="1"/>
</dbReference>
<dbReference type="Gene3D" id="2.30.30.280">
    <property type="entry name" value="Adenine nucleotide alpha hydrolases-like domains"/>
    <property type="match status" value="1"/>
</dbReference>
<dbReference type="Gene3D" id="3.40.50.620">
    <property type="entry name" value="HUPs"/>
    <property type="match status" value="1"/>
</dbReference>
<dbReference type="Gene3D" id="2.40.30.10">
    <property type="entry name" value="Translation factors"/>
    <property type="match status" value="1"/>
</dbReference>
<dbReference type="HAMAP" id="MF_00144">
    <property type="entry name" value="tRNA_thiouridyl_MnmA"/>
    <property type="match status" value="1"/>
</dbReference>
<dbReference type="InterPro" id="IPR004506">
    <property type="entry name" value="MnmA-like"/>
</dbReference>
<dbReference type="InterPro" id="IPR046885">
    <property type="entry name" value="MnmA-like_C"/>
</dbReference>
<dbReference type="InterPro" id="IPR046884">
    <property type="entry name" value="MnmA-like_central"/>
</dbReference>
<dbReference type="InterPro" id="IPR023382">
    <property type="entry name" value="MnmA-like_central_sf"/>
</dbReference>
<dbReference type="InterPro" id="IPR014729">
    <property type="entry name" value="Rossmann-like_a/b/a_fold"/>
</dbReference>
<dbReference type="InterPro" id="IPR051305">
    <property type="entry name" value="tRNA_2-thiouridylase_MnmA"/>
</dbReference>
<dbReference type="NCBIfam" id="NF001138">
    <property type="entry name" value="PRK00143.1"/>
    <property type="match status" value="1"/>
</dbReference>
<dbReference type="NCBIfam" id="TIGR00420">
    <property type="entry name" value="trmU"/>
    <property type="match status" value="1"/>
</dbReference>
<dbReference type="PANTHER" id="PTHR43052">
    <property type="match status" value="1"/>
</dbReference>
<dbReference type="PANTHER" id="PTHR43052:SF1">
    <property type="entry name" value="TRNA-5-TAURINOMETHYLURIDINE 2-SULFURTRANSFERASE"/>
    <property type="match status" value="1"/>
</dbReference>
<dbReference type="Pfam" id="PF03054">
    <property type="entry name" value="tRNA_Me_trans"/>
    <property type="match status" value="1"/>
</dbReference>
<dbReference type="Pfam" id="PF20258">
    <property type="entry name" value="tRNA_Me_trans_C"/>
    <property type="match status" value="1"/>
</dbReference>
<dbReference type="Pfam" id="PF20259">
    <property type="entry name" value="tRNA_Me_trans_M"/>
    <property type="match status" value="1"/>
</dbReference>
<dbReference type="SUPFAM" id="SSF52402">
    <property type="entry name" value="Adenine nucleotide alpha hydrolases-like"/>
    <property type="match status" value="1"/>
</dbReference>
<gene>
    <name evidence="1" type="primary">mnmA2</name>
    <name type="ordered locus">BF1407</name>
</gene>
<name>MNMA2_BACFR</name>
<protein>
    <recommendedName>
        <fullName evidence="1">tRNA-specific 2-thiouridylase MnmA 2</fullName>
        <ecNumber evidence="1">2.8.1.13</ecNumber>
    </recommendedName>
</protein>
<keyword id="KW-0067">ATP-binding</keyword>
<keyword id="KW-0963">Cytoplasm</keyword>
<keyword id="KW-1015">Disulfide bond</keyword>
<keyword id="KW-0547">Nucleotide-binding</keyword>
<keyword id="KW-0694">RNA-binding</keyword>
<keyword id="KW-0808">Transferase</keyword>
<keyword id="KW-0819">tRNA processing</keyword>
<keyword id="KW-0820">tRNA-binding</keyword>
<accession>Q64WG8</accession>
<reference key="1">
    <citation type="journal article" date="2004" name="Proc. Natl. Acad. Sci. U.S.A.">
        <title>Genomic analysis of Bacteroides fragilis reveals extensive DNA inversions regulating cell surface adaptation.</title>
        <authorList>
            <person name="Kuwahara T."/>
            <person name="Yamashita A."/>
            <person name="Hirakawa H."/>
            <person name="Nakayama H."/>
            <person name="Toh H."/>
            <person name="Okada N."/>
            <person name="Kuhara S."/>
            <person name="Hattori M."/>
            <person name="Hayashi T."/>
            <person name="Ohnishi Y."/>
        </authorList>
    </citation>
    <scope>NUCLEOTIDE SEQUENCE [LARGE SCALE GENOMIC DNA]</scope>
    <source>
        <strain>YCH46</strain>
    </source>
</reference>
<feature type="chain" id="PRO_0000349522" description="tRNA-specific 2-thiouridylase MnmA 2">
    <location>
        <begin position="1"/>
        <end position="353"/>
    </location>
</feature>
<feature type="region of interest" description="Interaction with target base in tRNA" evidence="1">
    <location>
        <begin position="92"/>
        <end position="94"/>
    </location>
</feature>
<feature type="region of interest" description="Interaction with tRNA" evidence="1">
    <location>
        <begin position="142"/>
        <end position="144"/>
    </location>
</feature>
<feature type="active site" description="Nucleophile" evidence="1">
    <location>
        <position position="97"/>
    </location>
</feature>
<feature type="active site" description="Cysteine persulfide intermediate" evidence="1">
    <location>
        <position position="192"/>
    </location>
</feature>
<feature type="binding site" evidence="1">
    <location>
        <begin position="6"/>
        <end position="13"/>
    </location>
    <ligand>
        <name>ATP</name>
        <dbReference type="ChEBI" id="CHEBI:30616"/>
    </ligand>
</feature>
<feature type="binding site" evidence="1">
    <location>
        <position position="120"/>
    </location>
    <ligand>
        <name>ATP</name>
        <dbReference type="ChEBI" id="CHEBI:30616"/>
    </ligand>
</feature>
<feature type="site" description="Interaction with tRNA" evidence="1">
    <location>
        <position position="121"/>
    </location>
</feature>
<feature type="site" description="Interaction with tRNA" evidence="1">
    <location>
        <position position="334"/>
    </location>
</feature>
<feature type="disulfide bond" description="Alternate" evidence="1">
    <location>
        <begin position="97"/>
        <end position="192"/>
    </location>
</feature>
<comment type="function">
    <text evidence="1">Catalyzes the 2-thiolation of uridine at the wobble position (U34) of tRNA, leading to the formation of s(2)U34.</text>
</comment>
<comment type="catalytic activity">
    <reaction evidence="1">
        <text>S-sulfanyl-L-cysteinyl-[protein] + uridine(34) in tRNA + AH2 + ATP = 2-thiouridine(34) in tRNA + L-cysteinyl-[protein] + A + AMP + diphosphate + H(+)</text>
        <dbReference type="Rhea" id="RHEA:47032"/>
        <dbReference type="Rhea" id="RHEA-COMP:10131"/>
        <dbReference type="Rhea" id="RHEA-COMP:11726"/>
        <dbReference type="Rhea" id="RHEA-COMP:11727"/>
        <dbReference type="Rhea" id="RHEA-COMP:11728"/>
        <dbReference type="ChEBI" id="CHEBI:13193"/>
        <dbReference type="ChEBI" id="CHEBI:15378"/>
        <dbReference type="ChEBI" id="CHEBI:17499"/>
        <dbReference type="ChEBI" id="CHEBI:29950"/>
        <dbReference type="ChEBI" id="CHEBI:30616"/>
        <dbReference type="ChEBI" id="CHEBI:33019"/>
        <dbReference type="ChEBI" id="CHEBI:61963"/>
        <dbReference type="ChEBI" id="CHEBI:65315"/>
        <dbReference type="ChEBI" id="CHEBI:87170"/>
        <dbReference type="ChEBI" id="CHEBI:456215"/>
        <dbReference type="EC" id="2.8.1.13"/>
    </reaction>
</comment>
<comment type="subcellular location">
    <subcellularLocation>
        <location evidence="1">Cytoplasm</location>
    </subcellularLocation>
</comment>
<comment type="similarity">
    <text evidence="1">Belongs to the MnmA/TRMU family.</text>
</comment>
<proteinExistence type="inferred from homology"/>